<protein>
    <recommendedName>
        <fullName evidence="1">Flagellar P-ring protein</fullName>
    </recommendedName>
    <alternativeName>
        <fullName evidence="1">Basal body P-ring protein</fullName>
    </alternativeName>
</protein>
<accession>Q4KG91</accession>
<reference key="1">
    <citation type="journal article" date="2005" name="Nat. Biotechnol.">
        <title>Complete genome sequence of the plant commensal Pseudomonas fluorescens Pf-5.</title>
        <authorList>
            <person name="Paulsen I.T."/>
            <person name="Press C.M."/>
            <person name="Ravel J."/>
            <person name="Kobayashi D.Y."/>
            <person name="Myers G.S.A."/>
            <person name="Mavrodi D.V."/>
            <person name="DeBoy R.T."/>
            <person name="Seshadri R."/>
            <person name="Ren Q."/>
            <person name="Madupu R."/>
            <person name="Dodson R.J."/>
            <person name="Durkin A.S."/>
            <person name="Brinkac L.M."/>
            <person name="Daugherty S.C."/>
            <person name="Sullivan S.A."/>
            <person name="Rosovitz M.J."/>
            <person name="Gwinn M.L."/>
            <person name="Zhou L."/>
            <person name="Schneider D.J."/>
            <person name="Cartinhour S.W."/>
            <person name="Nelson W.C."/>
            <person name="Weidman J."/>
            <person name="Watkins K."/>
            <person name="Tran K."/>
            <person name="Khouri H."/>
            <person name="Pierson E.A."/>
            <person name="Pierson L.S. III"/>
            <person name="Thomashow L.S."/>
            <person name="Loper J.E."/>
        </authorList>
    </citation>
    <scope>NUCLEOTIDE SEQUENCE [LARGE SCALE GENOMIC DNA]</scope>
    <source>
        <strain>ATCC BAA-477 / NRRL B-23932 / Pf-5</strain>
    </source>
</reference>
<feature type="signal peptide" evidence="1">
    <location>
        <begin position="1"/>
        <end position="22"/>
    </location>
</feature>
<feature type="chain" id="PRO_0000236310" description="Flagellar P-ring protein">
    <location>
        <begin position="23"/>
        <end position="369"/>
    </location>
</feature>
<keyword id="KW-0975">Bacterial flagellum</keyword>
<keyword id="KW-0574">Periplasm</keyword>
<keyword id="KW-0732">Signal</keyword>
<dbReference type="EMBL" id="CP000076">
    <property type="protein sequence ID" value="AAY90913.2"/>
    <property type="molecule type" value="Genomic_DNA"/>
</dbReference>
<dbReference type="RefSeq" id="WP_011059952.1">
    <property type="nucleotide sequence ID" value="NC_004129.6"/>
</dbReference>
<dbReference type="SMR" id="Q4KG91"/>
<dbReference type="STRING" id="220664.PFL_1616"/>
<dbReference type="KEGG" id="pfl:PFL_1616"/>
<dbReference type="PATRIC" id="fig|220664.5.peg.1655"/>
<dbReference type="eggNOG" id="COG1706">
    <property type="taxonomic scope" value="Bacteria"/>
</dbReference>
<dbReference type="HOGENOM" id="CLU_045235_1_0_6"/>
<dbReference type="Proteomes" id="UP000008540">
    <property type="component" value="Chromosome"/>
</dbReference>
<dbReference type="GO" id="GO:0009428">
    <property type="term" value="C:bacterial-type flagellum basal body, distal rod, P ring"/>
    <property type="evidence" value="ECO:0007669"/>
    <property type="project" value="InterPro"/>
</dbReference>
<dbReference type="GO" id="GO:0030288">
    <property type="term" value="C:outer membrane-bounded periplasmic space"/>
    <property type="evidence" value="ECO:0007669"/>
    <property type="project" value="InterPro"/>
</dbReference>
<dbReference type="GO" id="GO:0005198">
    <property type="term" value="F:structural molecule activity"/>
    <property type="evidence" value="ECO:0007669"/>
    <property type="project" value="InterPro"/>
</dbReference>
<dbReference type="GO" id="GO:0071973">
    <property type="term" value="P:bacterial-type flagellum-dependent cell motility"/>
    <property type="evidence" value="ECO:0007669"/>
    <property type="project" value="InterPro"/>
</dbReference>
<dbReference type="HAMAP" id="MF_00416">
    <property type="entry name" value="FlgI"/>
    <property type="match status" value="1"/>
</dbReference>
<dbReference type="InterPro" id="IPR001782">
    <property type="entry name" value="Flag_FlgI"/>
</dbReference>
<dbReference type="NCBIfam" id="NF003676">
    <property type="entry name" value="PRK05303.1"/>
    <property type="match status" value="1"/>
</dbReference>
<dbReference type="PANTHER" id="PTHR30381">
    <property type="entry name" value="FLAGELLAR P-RING PERIPLASMIC PROTEIN FLGI"/>
    <property type="match status" value="1"/>
</dbReference>
<dbReference type="PANTHER" id="PTHR30381:SF0">
    <property type="entry name" value="FLAGELLAR P-RING PROTEIN"/>
    <property type="match status" value="1"/>
</dbReference>
<dbReference type="Pfam" id="PF02119">
    <property type="entry name" value="FlgI"/>
    <property type="match status" value="1"/>
</dbReference>
<dbReference type="PRINTS" id="PR01010">
    <property type="entry name" value="FLGPRINGFLGI"/>
</dbReference>
<evidence type="ECO:0000255" key="1">
    <source>
        <dbReference type="HAMAP-Rule" id="MF_00416"/>
    </source>
</evidence>
<organism>
    <name type="scientific">Pseudomonas fluorescens (strain ATCC BAA-477 / NRRL B-23932 / Pf-5)</name>
    <dbReference type="NCBI Taxonomy" id="220664"/>
    <lineage>
        <taxon>Bacteria</taxon>
        <taxon>Pseudomonadati</taxon>
        <taxon>Pseudomonadota</taxon>
        <taxon>Gammaproteobacteria</taxon>
        <taxon>Pseudomonadales</taxon>
        <taxon>Pseudomonadaceae</taxon>
        <taxon>Pseudomonas</taxon>
    </lineage>
</organism>
<comment type="function">
    <text evidence="1">Assembles around the rod to form the L-ring and probably protects the motor/basal body from shearing forces during rotation.</text>
</comment>
<comment type="subunit">
    <text evidence="1">The basal body constitutes a major portion of the flagellar organelle and consists of four rings (L,P,S, and M) mounted on a central rod.</text>
</comment>
<comment type="subcellular location">
    <subcellularLocation>
        <location evidence="1">Periplasm</location>
    </subcellularLocation>
    <subcellularLocation>
        <location evidence="1">Bacterial flagellum basal body</location>
    </subcellularLocation>
</comment>
<comment type="similarity">
    <text evidence="1">Belongs to the FlgI family.</text>
</comment>
<name>FLGI_PSEF5</name>
<gene>
    <name evidence="1" type="primary">flgI</name>
    <name type="ordered locus">PFL_1616</name>
</gene>
<sequence>MLNFKHLMAAALLLSTSLGVQAERLKDIASISGVRSNQLIGYGLVVGLNGTGDQTTQTPFTLQTFNNMLSQFGIKVPAGSGNVQLKNVAAVSVSADLPAFAKPGQQVDITVSSIGNSKSLRGGTLLLTPLKGIDGNVYAIAQGNLVVGGFDAEGRDGSKITVNVPSAGRIPGGASVERAVPSGFNQGNSLTLNLNRSDFTTAKRIVDKINDMLGPGVAQAIDGGSIRVTAPLDPSQRVDYLSILENLEIDPGQAVAKVIINSRTGTIVIGQNVKVSPAAVTHGSLTVTITEDPIVSQPGPLSNGQTAVVPRSRVNAQQEAKPMFKFGPGTTLDEIVRAVNQVGAAPGDLMAILEALKQAGALQADLIVI</sequence>
<proteinExistence type="inferred from homology"/>